<keyword id="KW-0119">Carbohydrate metabolism</keyword>
<keyword id="KW-0963">Cytoplasm</keyword>
<keyword id="KW-0413">Isomerase</keyword>
<keyword id="KW-1185">Reference proteome</keyword>
<keyword id="KW-0684">Rhamnose metabolism</keyword>
<dbReference type="EC" id="5.1.3.32" evidence="1"/>
<dbReference type="EMBL" id="CP000822">
    <property type="protein sequence ID" value="ABV14197.1"/>
    <property type="molecule type" value="Genomic_DNA"/>
</dbReference>
<dbReference type="RefSeq" id="WP_012133904.1">
    <property type="nucleotide sequence ID" value="NC_009792.1"/>
</dbReference>
<dbReference type="SMR" id="A8AL34"/>
<dbReference type="STRING" id="290338.CKO_03106"/>
<dbReference type="GeneID" id="45136901"/>
<dbReference type="KEGG" id="cko:CKO_03106"/>
<dbReference type="HOGENOM" id="CLU_100689_2_0_6"/>
<dbReference type="OrthoDB" id="9799608at2"/>
<dbReference type="UniPathway" id="UPA00125"/>
<dbReference type="Proteomes" id="UP000008148">
    <property type="component" value="Chromosome"/>
</dbReference>
<dbReference type="GO" id="GO:0005737">
    <property type="term" value="C:cytoplasm"/>
    <property type="evidence" value="ECO:0007669"/>
    <property type="project" value="UniProtKB-SubCell"/>
</dbReference>
<dbReference type="GO" id="GO:0062192">
    <property type="term" value="F:L-rhamnose mutarotase activity"/>
    <property type="evidence" value="ECO:0007669"/>
    <property type="project" value="UniProtKB-EC"/>
</dbReference>
<dbReference type="GO" id="GO:0019301">
    <property type="term" value="P:rhamnose catabolic process"/>
    <property type="evidence" value="ECO:0007669"/>
    <property type="project" value="TreeGrafter"/>
</dbReference>
<dbReference type="Gene3D" id="3.30.70.100">
    <property type="match status" value="1"/>
</dbReference>
<dbReference type="HAMAP" id="MF_01663">
    <property type="entry name" value="L_rham_rotase"/>
    <property type="match status" value="1"/>
</dbReference>
<dbReference type="InterPro" id="IPR011008">
    <property type="entry name" value="Dimeric_a/b-barrel"/>
</dbReference>
<dbReference type="InterPro" id="IPR013448">
    <property type="entry name" value="L-rhamnose_mutarotase"/>
</dbReference>
<dbReference type="InterPro" id="IPR008000">
    <property type="entry name" value="Rham/fucose_mutarotase"/>
</dbReference>
<dbReference type="NCBIfam" id="TIGR02625">
    <property type="entry name" value="YiiL_rotase"/>
    <property type="match status" value="1"/>
</dbReference>
<dbReference type="PANTHER" id="PTHR34389">
    <property type="entry name" value="L-RHAMNOSE MUTAROTASE"/>
    <property type="match status" value="1"/>
</dbReference>
<dbReference type="PANTHER" id="PTHR34389:SF2">
    <property type="entry name" value="L-RHAMNOSE MUTAROTASE"/>
    <property type="match status" value="1"/>
</dbReference>
<dbReference type="Pfam" id="PF05336">
    <property type="entry name" value="rhaM"/>
    <property type="match status" value="1"/>
</dbReference>
<dbReference type="SUPFAM" id="SSF54909">
    <property type="entry name" value="Dimeric alpha+beta barrel"/>
    <property type="match status" value="1"/>
</dbReference>
<accession>A8AL34</accession>
<feature type="chain" id="PRO_0000344561" description="L-rhamnose mutarotase">
    <location>
        <begin position="1"/>
        <end position="104"/>
    </location>
</feature>
<feature type="active site" description="Proton donor" evidence="1">
    <location>
        <position position="22"/>
    </location>
</feature>
<feature type="binding site" evidence="1">
    <location>
        <position position="18"/>
    </location>
    <ligand>
        <name>substrate</name>
    </ligand>
</feature>
<feature type="binding site" evidence="1">
    <location>
        <position position="41"/>
    </location>
    <ligand>
        <name>substrate</name>
    </ligand>
</feature>
<feature type="binding site" evidence="1">
    <location>
        <begin position="76"/>
        <end position="77"/>
    </location>
    <ligand>
        <name>substrate</name>
    </ligand>
</feature>
<gene>
    <name evidence="1" type="primary">rhaM</name>
    <name type="ordered locus">CKO_03106</name>
</gene>
<name>RHAM_CITK8</name>
<organism>
    <name type="scientific">Citrobacter koseri (strain ATCC BAA-895 / CDC 4225-83 / SGSC4696)</name>
    <dbReference type="NCBI Taxonomy" id="290338"/>
    <lineage>
        <taxon>Bacteria</taxon>
        <taxon>Pseudomonadati</taxon>
        <taxon>Pseudomonadota</taxon>
        <taxon>Gammaproteobacteria</taxon>
        <taxon>Enterobacterales</taxon>
        <taxon>Enterobacteriaceae</taxon>
        <taxon>Citrobacter</taxon>
    </lineage>
</organism>
<evidence type="ECO:0000255" key="1">
    <source>
        <dbReference type="HAMAP-Rule" id="MF_01663"/>
    </source>
</evidence>
<reference key="1">
    <citation type="submission" date="2007-08" db="EMBL/GenBank/DDBJ databases">
        <authorList>
            <consortium name="The Citrobacter koseri Genome Sequencing Project"/>
            <person name="McClelland M."/>
            <person name="Sanderson E.K."/>
            <person name="Porwollik S."/>
            <person name="Spieth J."/>
            <person name="Clifton W.S."/>
            <person name="Latreille P."/>
            <person name="Courtney L."/>
            <person name="Wang C."/>
            <person name="Pepin K."/>
            <person name="Bhonagiri V."/>
            <person name="Nash W."/>
            <person name="Johnson M."/>
            <person name="Thiruvilangam P."/>
            <person name="Wilson R."/>
        </authorList>
    </citation>
    <scope>NUCLEOTIDE SEQUENCE [LARGE SCALE GENOMIC DNA]</scope>
    <source>
        <strain>ATCC BAA-895 / CDC 4225-83 / SGSC4696</strain>
    </source>
</reference>
<protein>
    <recommendedName>
        <fullName evidence="1">L-rhamnose mutarotase</fullName>
        <ecNumber evidence="1">5.1.3.32</ecNumber>
    </recommendedName>
    <alternativeName>
        <fullName evidence="1">Rhamnose 1-epimerase</fullName>
    </alternativeName>
    <alternativeName>
        <fullName evidence="1">Type-3 mutarotase</fullName>
    </alternativeName>
</protein>
<sequence length="104" mass="12291">MIRKAFVMQVNADAHEEYQRRHNPIWPELESVLKAHGAHHYAIYLDKERNLLFATVEIESEERWNAIASTDVCQRWWKHMRDVMPANPDNSPVSAELKEVFYLA</sequence>
<comment type="function">
    <text evidence="1">Involved in the anomeric conversion of L-rhamnose.</text>
</comment>
<comment type="catalytic activity">
    <reaction evidence="1">
        <text>alpha-L-rhamnose = beta-L-rhamnose</text>
        <dbReference type="Rhea" id="RHEA:25584"/>
        <dbReference type="ChEBI" id="CHEBI:27586"/>
        <dbReference type="ChEBI" id="CHEBI:27907"/>
        <dbReference type="EC" id="5.1.3.32"/>
    </reaction>
</comment>
<comment type="pathway">
    <text evidence="1">Carbohydrate metabolism; L-rhamnose metabolism.</text>
</comment>
<comment type="subunit">
    <text evidence="1">Homodimer.</text>
</comment>
<comment type="subcellular location">
    <subcellularLocation>
        <location evidence="1">Cytoplasm</location>
    </subcellularLocation>
</comment>
<comment type="similarity">
    <text evidence="1">Belongs to the rhamnose mutarotase family.</text>
</comment>
<proteinExistence type="inferred from homology"/>